<proteinExistence type="evidence at transcript level"/>
<sequence length="886" mass="98447">MSVVGFDVGNLSSYIAVARGGGIETMANEYSDRLTPSVVSFGEKSRTQGHAARSQAITNYKNTLSQFKRFIARQFSDPSVQKDAHVVPYKVTQLPNGNVGMQVQYLGETETFTPEQIYAMILTKLKATAEVNLCRKVVDCVISVPQYYTDLERRGVIHAAEIAGLNCLRVISDTTAVALAYGIYKQDLPTPEEKPRNVVFVDCGHSSLQVSVCAFNKGKLKVLANASDKNLGGRDFDWLLAEHFAVDFQTRYKMDVKSNQRAWLRLMAECDKTKKLMSANATVISMNIECIMNDRDVSGKISRADFEALAAELLKRVEVPLKSVLEQTKLKPEDIHSIEIVGGSSRIPSIKETIKKVFKKECSTTLNQDEAVARGCALQCAILSPTFRVRDFTVTDLTPYPIELEWKGTEGEDGSMEVSHKNHQAPFSKMLTFYRKEPFELVARYADTNLPLPERRIGRFKINGVFPTAEGESSKIKVKVRVDGHGIFKVSSASLIEKLPAQAEDAMEDSSPEENGPSKEEGSGASQSENDAPMDQSPVEGGAGEGEASADKEEQAENGAKETSKDKDQTSEGSKSDKESKDQNSEGSKSDNGSTETDAKATKKNKKTIKTHELTITASTDELSIAEVNNFFEKEGKMIAQDRLEKEKNDAKNAVEEYVYDMREKLCDKFEQYVSEKERGSFSKLLEETENWLYEDGEDETKSVYQAKITSLKKIGDPIENRYKEKHERPVAFEELGKALMLYGKTLDLYSQGDEKYSHIEKDEMAKVEKCLKEKEAWRDSKTSAQNQKAAYQDPVVTAQQIRSEIQSMKFICDPIINKPKPKPKEEPPKDNGPTPAEAAKDGGPAPTTEGEEKMDTGDQAPTGEASKEGETKPDETKPDVEMELD</sequence>
<organism>
    <name type="scientific">Mesocentrotus franciscanus</name>
    <name type="common">Giant red sea urchin</name>
    <name type="synonym">Strongylocentrotus franciscanus</name>
    <dbReference type="NCBI Taxonomy" id="1328066"/>
    <lineage>
        <taxon>Eukaryota</taxon>
        <taxon>Metazoa</taxon>
        <taxon>Echinodermata</taxon>
        <taxon>Eleutherozoa</taxon>
        <taxon>Echinozoa</taxon>
        <taxon>Echinoidea</taxon>
        <taxon>Euechinoidea</taxon>
        <taxon>Echinacea</taxon>
        <taxon>Camarodonta</taxon>
        <taxon>Echinidea</taxon>
        <taxon>Strongylocentrotidae</taxon>
        <taxon>Mesocentrotus</taxon>
    </lineage>
</organism>
<evidence type="ECO:0000256" key="1">
    <source>
        <dbReference type="SAM" id="MobiDB-lite"/>
    </source>
</evidence>
<evidence type="ECO:0000305" key="2"/>
<accession>Q94738</accession>
<reference key="1">
    <citation type="journal article" date="1997" name="Dev. Biol.">
        <title>Identification of a 97-kDa heat shock protein from S. franciscanus ovaries with 94% amino acid identity to the S. purpuratus egg surface receptor for sperm.</title>
        <authorList>
            <person name="Mauk R."/>
            <person name="Jaworski D."/>
            <person name="Kamei N."/>
            <person name="Glabe C.G."/>
        </authorList>
    </citation>
    <scope>NUCLEOTIDE SEQUENCE [MRNA]</scope>
</reference>
<name>HSP97_MESFR</name>
<protein>
    <recommendedName>
        <fullName>97 kDa heat shock protein</fullName>
    </recommendedName>
    <alternativeName>
        <fullName>Heat shock protein 110</fullName>
    </alternativeName>
</protein>
<dbReference type="EMBL" id="U69254">
    <property type="protein sequence ID" value="AAB09038.1"/>
    <property type="molecule type" value="mRNA"/>
</dbReference>
<dbReference type="SMR" id="Q94738"/>
<dbReference type="GO" id="GO:0005829">
    <property type="term" value="C:cytosol"/>
    <property type="evidence" value="ECO:0007669"/>
    <property type="project" value="TreeGrafter"/>
</dbReference>
<dbReference type="GO" id="GO:0005634">
    <property type="term" value="C:nucleus"/>
    <property type="evidence" value="ECO:0007669"/>
    <property type="project" value="TreeGrafter"/>
</dbReference>
<dbReference type="GO" id="GO:0005524">
    <property type="term" value="F:ATP binding"/>
    <property type="evidence" value="ECO:0007669"/>
    <property type="project" value="UniProtKB-KW"/>
</dbReference>
<dbReference type="GO" id="GO:0140662">
    <property type="term" value="F:ATP-dependent protein folding chaperone"/>
    <property type="evidence" value="ECO:0007669"/>
    <property type="project" value="InterPro"/>
</dbReference>
<dbReference type="CDD" id="cd10228">
    <property type="entry name" value="ASKHA_NBD_HSP70_HSPA4_like"/>
    <property type="match status" value="1"/>
</dbReference>
<dbReference type="FunFam" id="2.60.34.10:FF:000047">
    <property type="entry name" value="97 kDa heat shock protein"/>
    <property type="match status" value="1"/>
</dbReference>
<dbReference type="FunFam" id="1.20.1270.10:FF:000002">
    <property type="entry name" value="Heat shock 70 kDa protein 4"/>
    <property type="match status" value="1"/>
</dbReference>
<dbReference type="FunFam" id="3.30.30.30:FF:000002">
    <property type="entry name" value="Heat shock 70 kDa protein 4"/>
    <property type="match status" value="1"/>
</dbReference>
<dbReference type="FunFam" id="3.30.420.40:FF:000171">
    <property type="entry name" value="Heat shock 70 kDa protein 4"/>
    <property type="match status" value="1"/>
</dbReference>
<dbReference type="FunFam" id="3.90.640.10:FF:000004">
    <property type="entry name" value="Heat shock 70 kDa protein 4"/>
    <property type="match status" value="1"/>
</dbReference>
<dbReference type="FunFam" id="3.30.420.40:FF:000495">
    <property type="entry name" value="Heat shock protein 4b"/>
    <property type="match status" value="1"/>
</dbReference>
<dbReference type="Gene3D" id="1.20.1270.10">
    <property type="match status" value="1"/>
</dbReference>
<dbReference type="Gene3D" id="3.30.30.30">
    <property type="match status" value="1"/>
</dbReference>
<dbReference type="Gene3D" id="3.30.420.40">
    <property type="match status" value="2"/>
</dbReference>
<dbReference type="Gene3D" id="3.90.640.10">
    <property type="entry name" value="Actin, Chain A, domain 4"/>
    <property type="match status" value="1"/>
</dbReference>
<dbReference type="Gene3D" id="2.60.34.10">
    <property type="entry name" value="Substrate Binding Domain Of DNAk, Chain A, domain 1"/>
    <property type="match status" value="1"/>
</dbReference>
<dbReference type="InterPro" id="IPR043129">
    <property type="entry name" value="ATPase_NBD"/>
</dbReference>
<dbReference type="InterPro" id="IPR018181">
    <property type="entry name" value="Heat_shock_70_CS"/>
</dbReference>
<dbReference type="InterPro" id="IPR029048">
    <property type="entry name" value="HSP70_C_sf"/>
</dbReference>
<dbReference type="InterPro" id="IPR029047">
    <property type="entry name" value="HSP70_peptide-bd_sf"/>
</dbReference>
<dbReference type="InterPro" id="IPR013126">
    <property type="entry name" value="Hsp_70_fam"/>
</dbReference>
<dbReference type="PANTHER" id="PTHR45639:SF4">
    <property type="entry name" value="HSC70CB, ISOFORM G"/>
    <property type="match status" value="1"/>
</dbReference>
<dbReference type="PANTHER" id="PTHR45639">
    <property type="entry name" value="HSC70CB, ISOFORM G-RELATED"/>
    <property type="match status" value="1"/>
</dbReference>
<dbReference type="Pfam" id="PF00012">
    <property type="entry name" value="HSP70"/>
    <property type="match status" value="2"/>
</dbReference>
<dbReference type="PRINTS" id="PR00301">
    <property type="entry name" value="HEATSHOCK70"/>
</dbReference>
<dbReference type="SUPFAM" id="SSF53067">
    <property type="entry name" value="Actin-like ATPase domain"/>
    <property type="match status" value="2"/>
</dbReference>
<dbReference type="SUPFAM" id="SSF100934">
    <property type="entry name" value="Heat shock protein 70kD (HSP70), C-terminal subdomain"/>
    <property type="match status" value="2"/>
</dbReference>
<dbReference type="SUPFAM" id="SSF100920">
    <property type="entry name" value="Heat shock protein 70kD (HSP70), peptide-binding domain"/>
    <property type="match status" value="1"/>
</dbReference>
<dbReference type="PROSITE" id="PS01036">
    <property type="entry name" value="HSP70_3"/>
    <property type="match status" value="1"/>
</dbReference>
<comment type="subcellular location">
    <subcellularLocation>
        <location evidence="2">Cytoplasm</location>
    </subcellularLocation>
</comment>
<comment type="similarity">
    <text evidence="2">Belongs to the heat shock protein 70 family.</text>
</comment>
<feature type="chain" id="PRO_0000078674" description="97 kDa heat shock protein">
    <location>
        <begin position="1"/>
        <end position="886"/>
    </location>
</feature>
<feature type="region of interest" description="Disordered" evidence="1">
    <location>
        <begin position="501"/>
        <end position="614"/>
    </location>
</feature>
<feature type="region of interest" description="Disordered" evidence="1">
    <location>
        <begin position="775"/>
        <end position="795"/>
    </location>
</feature>
<feature type="region of interest" description="Disordered" evidence="1">
    <location>
        <begin position="813"/>
        <end position="886"/>
    </location>
</feature>
<feature type="compositionally biased region" description="Basic and acidic residues" evidence="1">
    <location>
        <begin position="549"/>
        <end position="584"/>
    </location>
</feature>
<feature type="compositionally biased region" description="Polar residues" evidence="1">
    <location>
        <begin position="585"/>
        <end position="594"/>
    </location>
</feature>
<feature type="compositionally biased region" description="Basic and acidic residues" evidence="1">
    <location>
        <begin position="866"/>
        <end position="886"/>
    </location>
</feature>
<gene>
    <name type="primary">HSP110</name>
</gene>
<keyword id="KW-0067">ATP-binding</keyword>
<keyword id="KW-0963">Cytoplasm</keyword>
<keyword id="KW-0547">Nucleotide-binding</keyword>